<name>KCNT2_HUMAN</name>
<evidence type="ECO:0000250" key="1">
    <source>
        <dbReference type="UniProtKB" id="Q5JUK3"/>
    </source>
</evidence>
<evidence type="ECO:0000250" key="2">
    <source>
        <dbReference type="UniProtKB" id="Q6UVM4"/>
    </source>
</evidence>
<evidence type="ECO:0000255" key="3"/>
<evidence type="ECO:0000255" key="4">
    <source>
        <dbReference type="PROSITE-ProRule" id="PRU00543"/>
    </source>
</evidence>
<evidence type="ECO:0000256" key="5">
    <source>
        <dbReference type="SAM" id="MobiDB-lite"/>
    </source>
</evidence>
<evidence type="ECO:0000269" key="6">
    <source>
    </source>
</evidence>
<evidence type="ECO:0000269" key="7">
    <source>
    </source>
</evidence>
<evidence type="ECO:0000269" key="8">
    <source>
    </source>
</evidence>
<evidence type="ECO:0000269" key="9">
    <source>
    </source>
</evidence>
<evidence type="ECO:0000269" key="10">
    <source>
    </source>
</evidence>
<evidence type="ECO:0000269" key="11">
    <source>
    </source>
</evidence>
<evidence type="ECO:0000269" key="12">
    <source>
    </source>
</evidence>
<evidence type="ECO:0000303" key="13">
    <source>
    </source>
</evidence>
<evidence type="ECO:0000303" key="14">
    <source>
    </source>
</evidence>
<evidence type="ECO:0000303" key="15">
    <source>
    </source>
</evidence>
<evidence type="ECO:0000303" key="16">
    <source>
    </source>
</evidence>
<evidence type="ECO:0000305" key="17"/>
<evidence type="ECO:0000312" key="18">
    <source>
        <dbReference type="HGNC" id="HGNC:18866"/>
    </source>
</evidence>
<organism>
    <name type="scientific">Homo sapiens</name>
    <name type="common">Human</name>
    <dbReference type="NCBI Taxonomy" id="9606"/>
    <lineage>
        <taxon>Eukaryota</taxon>
        <taxon>Metazoa</taxon>
        <taxon>Chordata</taxon>
        <taxon>Craniata</taxon>
        <taxon>Vertebrata</taxon>
        <taxon>Euteleostomi</taxon>
        <taxon>Mammalia</taxon>
        <taxon>Eutheria</taxon>
        <taxon>Euarchontoglires</taxon>
        <taxon>Primates</taxon>
        <taxon>Haplorrhini</taxon>
        <taxon>Catarrhini</taxon>
        <taxon>Hominidae</taxon>
        <taxon>Homo</taxon>
    </lineage>
</organism>
<accession>Q6UVM3</accession>
<accession>Q3SY59</accession>
<accession>Q5VTN1</accession>
<accession>Q6ZMT3</accession>
<reference key="1">
    <citation type="journal article" date="2003" name="J. Neurosci.">
        <title>Slick (Slo2.1), a rapidly-gating sodium-activated potassium channel inhibited by ATP.</title>
        <authorList>
            <person name="Bhattacharjee A."/>
            <person name="Joiner W.J."/>
            <person name="Wu M."/>
            <person name="Yang Y."/>
            <person name="Sigworth F.J."/>
            <person name="Kaczmarek L.K."/>
        </authorList>
    </citation>
    <scope>NUCLEOTIDE SEQUENCE [MRNA] (ISOFORM 1)</scope>
    <scope>FUNCTION</scope>
    <scope>TRANSPORTER ACTIVITY</scope>
    <scope>ACTIVITY REGULATION</scope>
    <scope>TISSUE SPECIFICITY</scope>
</reference>
<reference key="2">
    <citation type="journal article" date="2004" name="Nat. Genet.">
        <title>Complete sequencing and characterization of 21,243 full-length human cDNAs.</title>
        <authorList>
            <person name="Ota T."/>
            <person name="Suzuki Y."/>
            <person name="Nishikawa T."/>
            <person name="Otsuki T."/>
            <person name="Sugiyama T."/>
            <person name="Irie R."/>
            <person name="Wakamatsu A."/>
            <person name="Hayashi K."/>
            <person name="Sato H."/>
            <person name="Nagai K."/>
            <person name="Kimura K."/>
            <person name="Makita H."/>
            <person name="Sekine M."/>
            <person name="Obayashi M."/>
            <person name="Nishi T."/>
            <person name="Shibahara T."/>
            <person name="Tanaka T."/>
            <person name="Ishii S."/>
            <person name="Yamamoto J."/>
            <person name="Saito K."/>
            <person name="Kawai Y."/>
            <person name="Isono Y."/>
            <person name="Nakamura Y."/>
            <person name="Nagahari K."/>
            <person name="Murakami K."/>
            <person name="Yasuda T."/>
            <person name="Iwayanagi T."/>
            <person name="Wagatsuma M."/>
            <person name="Shiratori A."/>
            <person name="Sudo H."/>
            <person name="Hosoiri T."/>
            <person name="Kaku Y."/>
            <person name="Kodaira H."/>
            <person name="Kondo H."/>
            <person name="Sugawara M."/>
            <person name="Takahashi M."/>
            <person name="Kanda K."/>
            <person name="Yokoi T."/>
            <person name="Furuya T."/>
            <person name="Kikkawa E."/>
            <person name="Omura Y."/>
            <person name="Abe K."/>
            <person name="Kamihara K."/>
            <person name="Katsuta N."/>
            <person name="Sato K."/>
            <person name="Tanikawa M."/>
            <person name="Yamazaki M."/>
            <person name="Ninomiya K."/>
            <person name="Ishibashi T."/>
            <person name="Yamashita H."/>
            <person name="Murakawa K."/>
            <person name="Fujimori K."/>
            <person name="Tanai H."/>
            <person name="Kimata M."/>
            <person name="Watanabe M."/>
            <person name="Hiraoka S."/>
            <person name="Chiba Y."/>
            <person name="Ishida S."/>
            <person name="Ono Y."/>
            <person name="Takiguchi S."/>
            <person name="Watanabe S."/>
            <person name="Yosida M."/>
            <person name="Hotuta T."/>
            <person name="Kusano J."/>
            <person name="Kanehori K."/>
            <person name="Takahashi-Fujii A."/>
            <person name="Hara H."/>
            <person name="Tanase T.-O."/>
            <person name="Nomura Y."/>
            <person name="Togiya S."/>
            <person name="Komai F."/>
            <person name="Hara R."/>
            <person name="Takeuchi K."/>
            <person name="Arita M."/>
            <person name="Imose N."/>
            <person name="Musashino K."/>
            <person name="Yuuki H."/>
            <person name="Oshima A."/>
            <person name="Sasaki N."/>
            <person name="Aotsuka S."/>
            <person name="Yoshikawa Y."/>
            <person name="Matsunawa H."/>
            <person name="Ichihara T."/>
            <person name="Shiohata N."/>
            <person name="Sano S."/>
            <person name="Moriya S."/>
            <person name="Momiyama H."/>
            <person name="Satoh N."/>
            <person name="Takami S."/>
            <person name="Terashima Y."/>
            <person name="Suzuki O."/>
            <person name="Nakagawa S."/>
            <person name="Senoh A."/>
            <person name="Mizoguchi H."/>
            <person name="Goto Y."/>
            <person name="Shimizu F."/>
            <person name="Wakebe H."/>
            <person name="Hishigaki H."/>
            <person name="Watanabe T."/>
            <person name="Sugiyama A."/>
            <person name="Takemoto M."/>
            <person name="Kawakami B."/>
            <person name="Yamazaki M."/>
            <person name="Watanabe K."/>
            <person name="Kumagai A."/>
            <person name="Itakura S."/>
            <person name="Fukuzumi Y."/>
            <person name="Fujimori Y."/>
            <person name="Komiyama M."/>
            <person name="Tashiro H."/>
            <person name="Tanigami A."/>
            <person name="Fujiwara T."/>
            <person name="Ono T."/>
            <person name="Yamada K."/>
            <person name="Fujii Y."/>
            <person name="Ozaki K."/>
            <person name="Hirao M."/>
            <person name="Ohmori Y."/>
            <person name="Kawabata A."/>
            <person name="Hikiji T."/>
            <person name="Kobatake N."/>
            <person name="Inagaki H."/>
            <person name="Ikema Y."/>
            <person name="Okamoto S."/>
            <person name="Okitani R."/>
            <person name="Kawakami T."/>
            <person name="Noguchi S."/>
            <person name="Itoh T."/>
            <person name="Shigeta K."/>
            <person name="Senba T."/>
            <person name="Matsumura K."/>
            <person name="Nakajima Y."/>
            <person name="Mizuno T."/>
            <person name="Morinaga M."/>
            <person name="Sasaki M."/>
            <person name="Togashi T."/>
            <person name="Oyama M."/>
            <person name="Hata H."/>
            <person name="Watanabe M."/>
            <person name="Komatsu T."/>
            <person name="Mizushima-Sugano J."/>
            <person name="Satoh T."/>
            <person name="Shirai Y."/>
            <person name="Takahashi Y."/>
            <person name="Nakagawa K."/>
            <person name="Okumura K."/>
            <person name="Nagase T."/>
            <person name="Nomura N."/>
            <person name="Kikuchi H."/>
            <person name="Masuho Y."/>
            <person name="Yamashita R."/>
            <person name="Nakai K."/>
            <person name="Yada T."/>
            <person name="Nakamura Y."/>
            <person name="Ohara O."/>
            <person name="Isogai T."/>
            <person name="Sugano S."/>
        </authorList>
    </citation>
    <scope>NUCLEOTIDE SEQUENCE [LARGE SCALE MRNA] (ISOFORM 4)</scope>
    <source>
        <tissue>Trachea</tissue>
    </source>
</reference>
<reference key="3">
    <citation type="journal article" date="2007" name="BMC Genomics">
        <title>The full-ORF clone resource of the German cDNA consortium.</title>
        <authorList>
            <person name="Bechtel S."/>
            <person name="Rosenfelder H."/>
            <person name="Duda A."/>
            <person name="Schmidt C.P."/>
            <person name="Ernst U."/>
            <person name="Wellenreuther R."/>
            <person name="Mehrle A."/>
            <person name="Schuster C."/>
            <person name="Bahr A."/>
            <person name="Bloecker H."/>
            <person name="Heubner D."/>
            <person name="Hoerlein A."/>
            <person name="Michel G."/>
            <person name="Wedler H."/>
            <person name="Koehrer K."/>
            <person name="Ottenwaelder B."/>
            <person name="Poustka A."/>
            <person name="Wiemann S."/>
            <person name="Schupp I."/>
        </authorList>
    </citation>
    <scope>NUCLEOTIDE SEQUENCE [LARGE SCALE MRNA] (ISOFORM 2)</scope>
    <source>
        <tissue>Adipose tissue</tissue>
    </source>
</reference>
<reference key="4">
    <citation type="journal article" date="2006" name="Nature">
        <title>The DNA sequence and biological annotation of human chromosome 1.</title>
        <authorList>
            <person name="Gregory S.G."/>
            <person name="Barlow K.F."/>
            <person name="McLay K.E."/>
            <person name="Kaul R."/>
            <person name="Swarbreck D."/>
            <person name="Dunham A."/>
            <person name="Scott C.E."/>
            <person name="Howe K.L."/>
            <person name="Woodfine K."/>
            <person name="Spencer C.C.A."/>
            <person name="Jones M.C."/>
            <person name="Gillson C."/>
            <person name="Searle S."/>
            <person name="Zhou Y."/>
            <person name="Kokocinski F."/>
            <person name="McDonald L."/>
            <person name="Evans R."/>
            <person name="Phillips K."/>
            <person name="Atkinson A."/>
            <person name="Cooper R."/>
            <person name="Jones C."/>
            <person name="Hall R.E."/>
            <person name="Andrews T.D."/>
            <person name="Lloyd C."/>
            <person name="Ainscough R."/>
            <person name="Almeida J.P."/>
            <person name="Ambrose K.D."/>
            <person name="Anderson F."/>
            <person name="Andrew R.W."/>
            <person name="Ashwell R.I.S."/>
            <person name="Aubin K."/>
            <person name="Babbage A.K."/>
            <person name="Bagguley C.L."/>
            <person name="Bailey J."/>
            <person name="Beasley H."/>
            <person name="Bethel G."/>
            <person name="Bird C.P."/>
            <person name="Bray-Allen S."/>
            <person name="Brown J.Y."/>
            <person name="Brown A.J."/>
            <person name="Buckley D."/>
            <person name="Burton J."/>
            <person name="Bye J."/>
            <person name="Carder C."/>
            <person name="Chapman J.C."/>
            <person name="Clark S.Y."/>
            <person name="Clarke G."/>
            <person name="Clee C."/>
            <person name="Cobley V."/>
            <person name="Collier R.E."/>
            <person name="Corby N."/>
            <person name="Coville G.J."/>
            <person name="Davies J."/>
            <person name="Deadman R."/>
            <person name="Dunn M."/>
            <person name="Earthrowl M."/>
            <person name="Ellington A.G."/>
            <person name="Errington H."/>
            <person name="Frankish A."/>
            <person name="Frankland J."/>
            <person name="French L."/>
            <person name="Garner P."/>
            <person name="Garnett J."/>
            <person name="Gay L."/>
            <person name="Ghori M.R.J."/>
            <person name="Gibson R."/>
            <person name="Gilby L.M."/>
            <person name="Gillett W."/>
            <person name="Glithero R.J."/>
            <person name="Grafham D.V."/>
            <person name="Griffiths C."/>
            <person name="Griffiths-Jones S."/>
            <person name="Grocock R."/>
            <person name="Hammond S."/>
            <person name="Harrison E.S.I."/>
            <person name="Hart E."/>
            <person name="Haugen E."/>
            <person name="Heath P.D."/>
            <person name="Holmes S."/>
            <person name="Holt K."/>
            <person name="Howden P.J."/>
            <person name="Hunt A.R."/>
            <person name="Hunt S.E."/>
            <person name="Hunter G."/>
            <person name="Isherwood J."/>
            <person name="James R."/>
            <person name="Johnson C."/>
            <person name="Johnson D."/>
            <person name="Joy A."/>
            <person name="Kay M."/>
            <person name="Kershaw J.K."/>
            <person name="Kibukawa M."/>
            <person name="Kimberley A.M."/>
            <person name="King A."/>
            <person name="Knights A.J."/>
            <person name="Lad H."/>
            <person name="Laird G."/>
            <person name="Lawlor S."/>
            <person name="Leongamornlert D.A."/>
            <person name="Lloyd D.M."/>
            <person name="Loveland J."/>
            <person name="Lovell J."/>
            <person name="Lush M.J."/>
            <person name="Lyne R."/>
            <person name="Martin S."/>
            <person name="Mashreghi-Mohammadi M."/>
            <person name="Matthews L."/>
            <person name="Matthews N.S.W."/>
            <person name="McLaren S."/>
            <person name="Milne S."/>
            <person name="Mistry S."/>
            <person name="Moore M.J.F."/>
            <person name="Nickerson T."/>
            <person name="O'Dell C.N."/>
            <person name="Oliver K."/>
            <person name="Palmeiri A."/>
            <person name="Palmer S.A."/>
            <person name="Parker A."/>
            <person name="Patel D."/>
            <person name="Pearce A.V."/>
            <person name="Peck A.I."/>
            <person name="Pelan S."/>
            <person name="Phelps K."/>
            <person name="Phillimore B.J."/>
            <person name="Plumb R."/>
            <person name="Rajan J."/>
            <person name="Raymond C."/>
            <person name="Rouse G."/>
            <person name="Saenphimmachak C."/>
            <person name="Sehra H.K."/>
            <person name="Sheridan E."/>
            <person name="Shownkeen R."/>
            <person name="Sims S."/>
            <person name="Skuce C.D."/>
            <person name="Smith M."/>
            <person name="Steward C."/>
            <person name="Subramanian S."/>
            <person name="Sycamore N."/>
            <person name="Tracey A."/>
            <person name="Tromans A."/>
            <person name="Van Helmond Z."/>
            <person name="Wall M."/>
            <person name="Wallis J.M."/>
            <person name="White S."/>
            <person name="Whitehead S.L."/>
            <person name="Wilkinson J.E."/>
            <person name="Willey D.L."/>
            <person name="Williams H."/>
            <person name="Wilming L."/>
            <person name="Wray P.W."/>
            <person name="Wu Z."/>
            <person name="Coulson A."/>
            <person name="Vaudin M."/>
            <person name="Sulston J.E."/>
            <person name="Durbin R.M."/>
            <person name="Hubbard T."/>
            <person name="Wooster R."/>
            <person name="Dunham I."/>
            <person name="Carter N.P."/>
            <person name="McVean G."/>
            <person name="Ross M.T."/>
            <person name="Harrow J."/>
            <person name="Olson M.V."/>
            <person name="Beck S."/>
            <person name="Rogers J."/>
            <person name="Bentley D.R."/>
        </authorList>
    </citation>
    <scope>NUCLEOTIDE SEQUENCE [LARGE SCALE GENOMIC DNA]</scope>
</reference>
<reference key="5">
    <citation type="journal article" date="2004" name="Genome Res.">
        <title>The status, quality, and expansion of the NIH full-length cDNA project: the Mammalian Gene Collection (MGC).</title>
        <authorList>
            <consortium name="The MGC Project Team"/>
        </authorList>
    </citation>
    <scope>NUCLEOTIDE SEQUENCE [LARGE SCALE MRNA] (ISOFORMS 2 AND 4)</scope>
</reference>
<reference key="6">
    <citation type="journal article" date="2006" name="J. Neurosci.">
        <title>Opposite regulation of Slick and Slack K+ channels by neuromodulators.</title>
        <authorList>
            <person name="Santi C.M."/>
            <person name="Ferreira G."/>
            <person name="Yang B."/>
            <person name="Gazula V.R."/>
            <person name="Butler A."/>
            <person name="Wei A."/>
            <person name="Kaczmarek L.K."/>
            <person name="Salkoff L."/>
        </authorList>
    </citation>
    <scope>FUNCTION</scope>
    <scope>TRANSPORTER ACTIVITY</scope>
    <scope>PHOSPHORYLATION</scope>
    <scope>ACTIVITY REGULATION</scope>
</reference>
<reference key="7">
    <citation type="journal article" date="2014" name="Physiol. Rep.">
        <title>Intracellular ATP does not inhibit Slo2.1 K+ channels.</title>
        <authorList>
            <person name="Garg P."/>
            <person name="Sanguinetti M.C."/>
        </authorList>
    </citation>
    <scope>FUNCTION</scope>
    <scope>ACTIVITY REGULATION</scope>
    <scope>MUTAGENESIS OF LYS-1031</scope>
</reference>
<reference key="8">
    <citation type="journal article" date="2017" name="J. Physiol. (Lond.)">
        <title>Molecular mechanisms of Slo2 K+ channel closure.</title>
        <authorList>
            <person name="Giese M.H."/>
            <person name="Gardner A."/>
            <person name="Hansen A."/>
            <person name="Sanguinetti M.C."/>
        </authorList>
    </citation>
    <scope>FUNCTION</scope>
    <scope>MUTAGENESIS OF LEU-267; LEU-270 AND MET-282</scope>
</reference>
<reference key="9">
    <citation type="journal article" date="2017" name="Cell Rep.">
        <title>A De Novo Mutation in the Sodium-Activated Potassium Channel KCNT2 Alters Ion Selectivity and Causes Epileptic Encephalopathy.</title>
        <authorList>
            <person name="Gururaj S."/>
            <person name="Palmer E.E."/>
            <person name="Sheehan G.D."/>
            <person name="Kandula T."/>
            <person name="Macintosh R."/>
            <person name="Ying K."/>
            <person name="Morris P."/>
            <person name="Tao J."/>
            <person name="Dias K.R."/>
            <person name="Zhu Y."/>
            <person name="Dinger M.E."/>
            <person name="Cowley M.J."/>
            <person name="Kirk E.P."/>
            <person name="Roscioli T."/>
            <person name="Sachdev R."/>
            <person name="Duffey M.E."/>
            <person name="Bye A."/>
            <person name="Bhattacharjee A."/>
        </authorList>
    </citation>
    <scope>FUNCTION</scope>
    <scope>ACTIVITY REGULATION</scope>
    <scope>TRANSPORTER ACTIVITY</scope>
    <scope>SUBCELLULAR LOCATION</scope>
    <scope>INVOLVEMENT IN DEE57</scope>
    <scope>VARIANT DEE57 LEU-240</scope>
    <scope>CHARACTERIZATION OF VARIANT DEE57 LEU-240</scope>
</reference>
<reference key="10">
    <citation type="journal article" date="2018" name="Ann. Neurol.">
        <title>De novo gain-of-function variants in KCNT2 as a novel cause of developmental and epileptic encephalopathy.</title>
        <authorList>
            <person name="Ambrosino P."/>
            <person name="Soldovieri M.V."/>
            <person name="Bast T."/>
            <person name="Turnpenny P.D."/>
            <person name="Uhrig S."/>
            <person name="Biskup S."/>
            <person name="Doecker M."/>
            <person name="Fleck T."/>
            <person name="Mosca I."/>
            <person name="Manocchio L."/>
            <person name="Iraci N."/>
            <person name="Taglialatela M."/>
            <person name="Lemke J.R."/>
        </authorList>
    </citation>
    <scope>VARIANTS DEE57 HIS-190 AND PRO-190</scope>
    <scope>FUNCTION</scope>
</reference>
<reference key="11">
    <citation type="journal article" date="2006" name="Science">
        <title>The consensus coding sequences of human breast and colorectal cancers.</title>
        <authorList>
            <person name="Sjoeblom T."/>
            <person name="Jones S."/>
            <person name="Wood L.D."/>
            <person name="Parsons D.W."/>
            <person name="Lin J."/>
            <person name="Barber T.D."/>
            <person name="Mandelker D."/>
            <person name="Leary R.J."/>
            <person name="Ptak J."/>
            <person name="Silliman N."/>
            <person name="Szabo S."/>
            <person name="Buckhaults P."/>
            <person name="Farrell C."/>
            <person name="Meeh P."/>
            <person name="Markowitz S.D."/>
            <person name="Willis J."/>
            <person name="Dawson D."/>
            <person name="Willson J.K.V."/>
            <person name="Gazdar A.F."/>
            <person name="Hartigan J."/>
            <person name="Wu L."/>
            <person name="Liu C."/>
            <person name="Parmigiani G."/>
            <person name="Park B.H."/>
            <person name="Bachman K.E."/>
            <person name="Papadopoulos N."/>
            <person name="Vogelstein B."/>
            <person name="Kinzler K.W."/>
            <person name="Velculescu V.E."/>
        </authorList>
    </citation>
    <scope>VARIANT [LARGE SCALE ANALYSIS] ILE-33</scope>
</reference>
<feature type="chain" id="PRO_0000312503" description="Potassium channel subfamily T member 2">
    <location>
        <begin position="1"/>
        <end position="1135"/>
    </location>
</feature>
<feature type="topological domain" description="Cytoplasmic" evidence="3">
    <location>
        <begin position="1"/>
        <end position="63"/>
    </location>
</feature>
<feature type="transmembrane region" description="Helical; Name=Segment S1" evidence="3">
    <location>
        <begin position="64"/>
        <end position="84"/>
    </location>
</feature>
<feature type="topological domain" description="Extracellular" evidence="3">
    <location>
        <begin position="85"/>
        <end position="101"/>
    </location>
</feature>
<feature type="transmembrane region" description="Helical; Name=Segment S2" evidence="3">
    <location>
        <begin position="102"/>
        <end position="122"/>
    </location>
</feature>
<feature type="topological domain" description="Cytoplasmic" evidence="3">
    <location>
        <begin position="123"/>
        <end position="137"/>
    </location>
</feature>
<feature type="transmembrane region" description="Helical; Name=Segment S3" evidence="3">
    <location>
        <begin position="138"/>
        <end position="158"/>
    </location>
</feature>
<feature type="topological domain" description="Extracellular" evidence="3">
    <location>
        <begin position="159"/>
        <end position="164"/>
    </location>
</feature>
<feature type="transmembrane region" description="Helical; Name=Segment S4" evidence="3">
    <location>
        <begin position="165"/>
        <end position="185"/>
    </location>
</feature>
<feature type="topological domain" description="Cytoplasmic" evidence="3">
    <location>
        <begin position="186"/>
        <end position="198"/>
    </location>
</feature>
<feature type="transmembrane region" description="Helical; Name=Segment S5" evidence="3">
    <location>
        <begin position="199"/>
        <end position="219"/>
    </location>
</feature>
<feature type="topological domain" description="Extracellular" evidence="3">
    <location>
        <begin position="220"/>
        <end position="228"/>
    </location>
</feature>
<feature type="intramembrane region" description="Pore-forming" evidence="3">
    <location>
        <begin position="229"/>
        <end position="249"/>
    </location>
</feature>
<feature type="topological domain" description="Extracellular" evidence="3">
    <location>
        <begin position="250"/>
        <end position="256"/>
    </location>
</feature>
<feature type="transmembrane region" description="Helical; Name=Segment S6" evidence="3">
    <location>
        <begin position="257"/>
        <end position="277"/>
    </location>
</feature>
<feature type="topological domain" description="Cytoplasmic" evidence="3">
    <location>
        <begin position="278"/>
        <end position="1135"/>
    </location>
</feature>
<feature type="domain" description="RCK N-terminal 1" evidence="4">
    <location>
        <begin position="299"/>
        <end position="435"/>
    </location>
</feature>
<feature type="domain" description="RCK N-terminal 2" evidence="4">
    <location>
        <begin position="718"/>
        <end position="858"/>
    </location>
</feature>
<feature type="region of interest" description="Disordered" evidence="5">
    <location>
        <begin position="977"/>
        <end position="1010"/>
    </location>
</feature>
<feature type="region of interest" description="Disordered" evidence="5">
    <location>
        <begin position="1017"/>
        <end position="1036"/>
    </location>
</feature>
<feature type="region of interest" description="Disordered" evidence="5">
    <location>
        <begin position="1113"/>
        <end position="1135"/>
    </location>
</feature>
<feature type="compositionally biased region" description="Basic residues" evidence="5">
    <location>
        <begin position="1017"/>
        <end position="1030"/>
    </location>
</feature>
<feature type="compositionally biased region" description="Polar residues" evidence="5">
    <location>
        <begin position="1118"/>
        <end position="1127"/>
    </location>
</feature>
<feature type="glycosylation site" description="N-linked (GlcNAc...) asparagine" evidence="3">
    <location>
        <position position="99"/>
    </location>
</feature>
<feature type="splice variant" id="VSP_029852" description="In isoform 4." evidence="14 15">
    <location>
        <begin position="129"/>
        <end position="153"/>
    </location>
</feature>
<feature type="splice variant" id="VSP_029853" description="In isoform 4." evidence="14 15">
    <original>Q</original>
    <variation>QCVCLCCR</variation>
    <location>
        <position position="468"/>
    </location>
</feature>
<feature type="splice variant" id="VSP_029854" description="In isoform 3." evidence="17">
    <location>
        <begin position="469"/>
        <end position="518"/>
    </location>
</feature>
<feature type="splice variant" id="VSP_029855" description="In isoform 2, isoform 3 and isoform 4." evidence="14 15 16">
    <location>
        <begin position="760"/>
        <end position="783"/>
    </location>
</feature>
<feature type="splice variant" id="VSP_029856" description="In isoform 3 and isoform 4." evidence="14 15">
    <original>E</original>
    <variation>ESRKIASQ</variation>
    <location>
        <position position="970"/>
    </location>
</feature>
<feature type="splice variant" id="VSP_029857" description="In isoform 4." evidence="14 15">
    <original>DEMNDHQSTLSYILINPSPDTRIELNDVVYLIRPDPLAYLPNSEPSRRNSICNVTGQDSREETQL</original>
    <variation>GMLFKNYCIYGLVISCH</variation>
    <location>
        <begin position="1071"/>
        <end position="1135"/>
    </location>
</feature>
<feature type="sequence variant" id="VAR_037527" description="In a breast cancer sample; somatic mutation." evidence="8">
    <original>V</original>
    <variation>I</variation>
    <location>
        <position position="33"/>
    </location>
</feature>
<feature type="sequence variant" id="VAR_089251" description="In DEE57; markedly increased outward rectifying current." evidence="12">
    <original>R</original>
    <variation>H</variation>
    <location>
        <position position="190"/>
    </location>
</feature>
<feature type="sequence variant" id="VAR_089252" description="In DEE57; markedly increased outward rectifying current." evidence="12">
    <original>R</original>
    <variation>P</variation>
    <location>
        <position position="190"/>
    </location>
</feature>
<feature type="sequence variant" id="VAR_080867" description="In DEE57; decreased protein abundance; loss of chloride-activated potassium channel activity; loss of potassium selectivity. Causes membrane hyperexcitability in primary neurons; dbSNP:rs1060499537." evidence="11">
    <original>F</original>
    <variation>L</variation>
    <location>
        <position position="240"/>
    </location>
</feature>
<feature type="sequence variant" id="VAR_037528" description="In dbSNP:rs12738104.">
    <original>C</original>
    <variation>W</variation>
    <location>
        <position position="413"/>
    </location>
</feature>
<feature type="sequence variant" id="VAR_037529" description="In dbSNP:rs12742082.">
    <original>K</original>
    <variation>N</variation>
    <location>
        <position position="429"/>
    </location>
</feature>
<feature type="mutagenesis site" description="Constitutively open channel." evidence="10">
    <original>L</original>
    <variation>H</variation>
    <variation>N</variation>
    <variation>T</variation>
    <variation>E</variation>
    <variation>Q</variation>
    <variation>S</variation>
    <location>
        <position position="267"/>
    </location>
</feature>
<feature type="mutagenesis site" description="Constitutively open channel; when associated with N-270." evidence="10">
    <original>L</original>
    <variation>N</variation>
    <location>
        <position position="267"/>
    </location>
</feature>
<feature type="mutagenesis site" description="Does not affect channel activity. Constitutively open channel; when associated with N-267." evidence="10">
    <original>L</original>
    <variation>N</variation>
    <location>
        <position position="270"/>
    </location>
</feature>
<feature type="mutagenesis site" description="Constitutively open channel." evidence="10">
    <original>L</original>
    <variation>W</variation>
    <variation>H</variation>
    <variation>Q</variation>
    <location>
        <position position="270"/>
    </location>
</feature>
<feature type="mutagenesis site" description="Does not induce constitutive opening." evidence="10">
    <original>M</original>
    <variation>A</variation>
    <location>
        <position position="282"/>
    </location>
</feature>
<feature type="mutagenesis site" description="Does not affect KCNT2 channel activity." evidence="9">
    <original>K</original>
    <variation>A</variation>
    <location>
        <position position="1031"/>
    </location>
</feature>
<keyword id="KW-0025">Alternative splicing</keyword>
<keyword id="KW-1003">Cell membrane</keyword>
<keyword id="KW-0225">Disease variant</keyword>
<keyword id="KW-0887">Epilepsy</keyword>
<keyword id="KW-0325">Glycoprotein</keyword>
<keyword id="KW-0407">Ion channel</keyword>
<keyword id="KW-0406">Ion transport</keyword>
<keyword id="KW-0472">Membrane</keyword>
<keyword id="KW-0597">Phosphoprotein</keyword>
<keyword id="KW-0630">Potassium</keyword>
<keyword id="KW-0631">Potassium channel</keyword>
<keyword id="KW-0633">Potassium transport</keyword>
<keyword id="KW-1267">Proteomics identification</keyword>
<keyword id="KW-1185">Reference proteome</keyword>
<keyword id="KW-0812">Transmembrane</keyword>
<keyword id="KW-1133">Transmembrane helix</keyword>
<keyword id="KW-0813">Transport</keyword>
<dbReference type="EMBL" id="AY359444">
    <property type="protein sequence ID" value="AAR06170.1"/>
    <property type="molecule type" value="mRNA"/>
</dbReference>
<dbReference type="EMBL" id="AK131498">
    <property type="protein sequence ID" value="BAD18642.1"/>
    <property type="molecule type" value="mRNA"/>
</dbReference>
<dbReference type="EMBL" id="BX647852">
    <property type="protein sequence ID" value="CAI46099.1"/>
    <property type="molecule type" value="mRNA"/>
</dbReference>
<dbReference type="EMBL" id="AL138931">
    <property type="status" value="NOT_ANNOTATED_CDS"/>
    <property type="molecule type" value="Genomic_DNA"/>
</dbReference>
<dbReference type="EMBL" id="AL139137">
    <property type="status" value="NOT_ANNOTATED_CDS"/>
    <property type="molecule type" value="Genomic_DNA"/>
</dbReference>
<dbReference type="EMBL" id="AL358853">
    <property type="status" value="NOT_ANNOTATED_CDS"/>
    <property type="molecule type" value="Genomic_DNA"/>
</dbReference>
<dbReference type="EMBL" id="AL591604">
    <property type="status" value="NOT_ANNOTATED_CDS"/>
    <property type="molecule type" value="Genomic_DNA"/>
</dbReference>
<dbReference type="EMBL" id="BC103948">
    <property type="protein sequence ID" value="AAI03949.1"/>
    <property type="molecule type" value="mRNA"/>
</dbReference>
<dbReference type="EMBL" id="BC103949">
    <property type="protein sequence ID" value="AAI03950.1"/>
    <property type="molecule type" value="mRNA"/>
</dbReference>
<dbReference type="EMBL" id="BC103950">
    <property type="protein sequence ID" value="AAI03951.1"/>
    <property type="molecule type" value="mRNA"/>
</dbReference>
<dbReference type="CCDS" id="CCDS1384.1">
    <molecule id="Q6UVM3-1"/>
</dbReference>
<dbReference type="CCDS" id="CCDS72994.1">
    <molecule id="Q6UVM3-3"/>
</dbReference>
<dbReference type="CCDS" id="CCDS72995.1">
    <molecule id="Q6UVM3-2"/>
</dbReference>
<dbReference type="RefSeq" id="NP_001274748.1">
    <molecule id="Q6UVM3-2"/>
    <property type="nucleotide sequence ID" value="NM_001287819.3"/>
</dbReference>
<dbReference type="RefSeq" id="NP_001274749.1">
    <molecule id="Q6UVM3-3"/>
    <property type="nucleotide sequence ID" value="NM_001287820.3"/>
</dbReference>
<dbReference type="RefSeq" id="NP_940905.2">
    <molecule id="Q6UVM3-1"/>
    <property type="nucleotide sequence ID" value="NM_198503.3"/>
</dbReference>
<dbReference type="SMR" id="Q6UVM3"/>
<dbReference type="BioGRID" id="131252">
    <property type="interactions" value="32"/>
</dbReference>
<dbReference type="FunCoup" id="Q6UVM3">
    <property type="interactions" value="829"/>
</dbReference>
<dbReference type="IntAct" id="Q6UVM3">
    <property type="interactions" value="30"/>
</dbReference>
<dbReference type="STRING" id="9606.ENSP00000294725"/>
<dbReference type="BindingDB" id="Q6UVM3"/>
<dbReference type="ChEMBL" id="CHEMBL4739693"/>
<dbReference type="DrugBank" id="DB17045">
    <property type="generic name" value="Phorbol 12-myristate 13-acetate diester"/>
</dbReference>
<dbReference type="DrugBank" id="DB08837">
    <property type="generic name" value="Tetraethylammonium"/>
</dbReference>
<dbReference type="DrugCentral" id="Q6UVM3"/>
<dbReference type="GuidetoPHARMACOLOGY" id="386"/>
<dbReference type="TCDB" id="1.A.1.3.6">
    <property type="family name" value="the voltage-gated ion channel (vic) superfamily"/>
</dbReference>
<dbReference type="GlyCosmos" id="Q6UVM3">
    <property type="glycosylation" value="1 site, No reported glycans"/>
</dbReference>
<dbReference type="GlyGen" id="Q6UVM3">
    <property type="glycosylation" value="1 site"/>
</dbReference>
<dbReference type="iPTMnet" id="Q6UVM3"/>
<dbReference type="PhosphoSitePlus" id="Q6UVM3"/>
<dbReference type="BioMuta" id="KCNT2"/>
<dbReference type="DMDM" id="74749370"/>
<dbReference type="jPOST" id="Q6UVM3"/>
<dbReference type="MassIVE" id="Q6UVM3"/>
<dbReference type="PaxDb" id="9606-ENSP00000294725"/>
<dbReference type="PeptideAtlas" id="Q6UVM3"/>
<dbReference type="ProteomicsDB" id="67432">
    <molecule id="Q6UVM3-1"/>
</dbReference>
<dbReference type="ProteomicsDB" id="67433">
    <molecule id="Q6UVM3-2"/>
</dbReference>
<dbReference type="ProteomicsDB" id="67434">
    <molecule id="Q6UVM3-3"/>
</dbReference>
<dbReference type="ProteomicsDB" id="67435">
    <molecule id="Q6UVM3-4"/>
</dbReference>
<dbReference type="Antibodypedia" id="34469">
    <property type="antibodies" value="176 antibodies from 22 providers"/>
</dbReference>
<dbReference type="DNASU" id="343450"/>
<dbReference type="Ensembl" id="ENST00000294725.14">
    <molecule id="Q6UVM3-1"/>
    <property type="protein sequence ID" value="ENSP00000294725.8"/>
    <property type="gene ID" value="ENSG00000162687.19"/>
</dbReference>
<dbReference type="Ensembl" id="ENST00000367433.9">
    <molecule id="Q6UVM3-2"/>
    <property type="protein sequence ID" value="ENSP00000356403.5"/>
    <property type="gene ID" value="ENSG00000162687.19"/>
</dbReference>
<dbReference type="Ensembl" id="ENST00000609185.5">
    <molecule id="Q6UVM3-3"/>
    <property type="protein sequence ID" value="ENSP00000476657.1"/>
    <property type="gene ID" value="ENSG00000162687.19"/>
</dbReference>
<dbReference type="Ensembl" id="ENST00000709528.1">
    <molecule id="Q6UVM3-2"/>
    <property type="protein sequence ID" value="ENSP00000517744.1"/>
    <property type="gene ID" value="ENSG00000291999.1"/>
</dbReference>
<dbReference type="Ensembl" id="ENST00000709531.1">
    <molecule id="Q6UVM3-3"/>
    <property type="protein sequence ID" value="ENSP00000517746.1"/>
    <property type="gene ID" value="ENSG00000291999.1"/>
</dbReference>
<dbReference type="Ensembl" id="ENST00000709532.1">
    <molecule id="Q6UVM3-1"/>
    <property type="protein sequence ID" value="ENSP00000517747.1"/>
    <property type="gene ID" value="ENSG00000291999.1"/>
</dbReference>
<dbReference type="GeneID" id="343450"/>
<dbReference type="KEGG" id="hsa:343450"/>
<dbReference type="MANE-Select" id="ENST00000294725.14">
    <property type="protein sequence ID" value="ENSP00000294725.8"/>
    <property type="RefSeq nucleotide sequence ID" value="NM_198503.5"/>
    <property type="RefSeq protein sequence ID" value="NP_940905.2"/>
</dbReference>
<dbReference type="UCSC" id="uc001gtd.3">
    <molecule id="Q6UVM3-1"/>
    <property type="organism name" value="human"/>
</dbReference>
<dbReference type="AGR" id="HGNC:18866"/>
<dbReference type="CTD" id="343450"/>
<dbReference type="DisGeNET" id="343450"/>
<dbReference type="GeneCards" id="KCNT2"/>
<dbReference type="HGNC" id="HGNC:18866">
    <property type="gene designation" value="KCNT2"/>
</dbReference>
<dbReference type="HPA" id="ENSG00000162687">
    <property type="expression patterns" value="Tissue enhanced (ovary)"/>
</dbReference>
<dbReference type="MalaCards" id="KCNT2"/>
<dbReference type="MIM" id="610044">
    <property type="type" value="gene"/>
</dbReference>
<dbReference type="MIM" id="617771">
    <property type="type" value="phenotype"/>
</dbReference>
<dbReference type="neXtProt" id="NX_Q6UVM3"/>
<dbReference type="OpenTargets" id="ENSG00000162687"/>
<dbReference type="PharmGKB" id="PA38726"/>
<dbReference type="VEuPathDB" id="HostDB:ENSG00000162687"/>
<dbReference type="eggNOG" id="KOG3193">
    <property type="taxonomic scope" value="Eukaryota"/>
</dbReference>
<dbReference type="GeneTree" id="ENSGT00940000158746"/>
<dbReference type="HOGENOM" id="CLU_003370_0_0_1"/>
<dbReference type="InParanoid" id="Q6UVM3"/>
<dbReference type="OMA" id="SDVHPTY"/>
<dbReference type="OrthoDB" id="257992at2759"/>
<dbReference type="PAN-GO" id="Q6UVM3">
    <property type="GO annotations" value="4 GO annotations based on evolutionary models"/>
</dbReference>
<dbReference type="PhylomeDB" id="Q6UVM3"/>
<dbReference type="TreeFam" id="TF314283"/>
<dbReference type="PathwayCommons" id="Q6UVM3"/>
<dbReference type="SignaLink" id="Q6UVM3"/>
<dbReference type="BioGRID-ORCS" id="343450">
    <property type="hits" value="10 hits in 1143 CRISPR screens"/>
</dbReference>
<dbReference type="ChiTaRS" id="KCNT2">
    <property type="organism name" value="human"/>
</dbReference>
<dbReference type="GeneWiki" id="KCNT2"/>
<dbReference type="GenomeRNAi" id="343450"/>
<dbReference type="Pharos" id="Q6UVM3">
    <property type="development level" value="Tchem"/>
</dbReference>
<dbReference type="PRO" id="PR:Q6UVM3"/>
<dbReference type="Proteomes" id="UP000005640">
    <property type="component" value="Chromosome 1"/>
</dbReference>
<dbReference type="RNAct" id="Q6UVM3">
    <property type="molecule type" value="protein"/>
</dbReference>
<dbReference type="Bgee" id="ENSG00000162687">
    <property type="expression patterns" value="Expressed in parietal pleura and 145 other cell types or tissues"/>
</dbReference>
<dbReference type="ExpressionAtlas" id="Q6UVM3">
    <property type="expression patterns" value="baseline and differential"/>
</dbReference>
<dbReference type="GO" id="GO:0005886">
    <property type="term" value="C:plasma membrane"/>
    <property type="evidence" value="ECO:0000314"/>
    <property type="project" value="UniProtKB"/>
</dbReference>
<dbReference type="GO" id="GO:0070089">
    <property type="term" value="F:chloride-activated potassium channel activity"/>
    <property type="evidence" value="ECO:0000314"/>
    <property type="project" value="UniProtKB"/>
</dbReference>
<dbReference type="GO" id="GO:0005228">
    <property type="term" value="F:intracellular sodium-activated potassium channel activity"/>
    <property type="evidence" value="ECO:0000314"/>
    <property type="project" value="UniProtKB"/>
</dbReference>
<dbReference type="GO" id="GO:0015271">
    <property type="term" value="F:outward rectifier potassium channel activity"/>
    <property type="evidence" value="ECO:0000318"/>
    <property type="project" value="GO_Central"/>
</dbReference>
<dbReference type="GO" id="GO:0097623">
    <property type="term" value="P:potassium ion export across plasma membrane"/>
    <property type="evidence" value="ECO:0000314"/>
    <property type="project" value="UniProtKB"/>
</dbReference>
<dbReference type="GO" id="GO:0071805">
    <property type="term" value="P:potassium ion transmembrane transport"/>
    <property type="evidence" value="ECO:0000318"/>
    <property type="project" value="GO_Central"/>
</dbReference>
<dbReference type="FunFam" id="3.40.50.720:FF:000011">
    <property type="entry name" value="Potassium channel subfamily T member 1"/>
    <property type="match status" value="1"/>
</dbReference>
<dbReference type="FunFam" id="3.40.50.720:FF:000034">
    <property type="entry name" value="Potassium channel subfamily T member 1"/>
    <property type="match status" value="1"/>
</dbReference>
<dbReference type="FunFam" id="1.10.287.70:FF:000069">
    <property type="entry name" value="Potassium sodium-activated channel subfamily T member 1"/>
    <property type="match status" value="1"/>
</dbReference>
<dbReference type="Gene3D" id="1.10.287.70">
    <property type="match status" value="1"/>
</dbReference>
<dbReference type="Gene3D" id="3.40.50.720">
    <property type="entry name" value="NAD(P)-binding Rossmann-like Domain"/>
    <property type="match status" value="2"/>
</dbReference>
<dbReference type="InterPro" id="IPR003929">
    <property type="entry name" value="K_chnl_BK_asu"/>
</dbReference>
<dbReference type="InterPro" id="IPR013099">
    <property type="entry name" value="K_chnl_dom"/>
</dbReference>
<dbReference type="InterPro" id="IPR047871">
    <property type="entry name" value="K_chnl_Slo-like"/>
</dbReference>
<dbReference type="InterPro" id="IPR036291">
    <property type="entry name" value="NAD(P)-bd_dom_sf"/>
</dbReference>
<dbReference type="InterPro" id="IPR003148">
    <property type="entry name" value="RCK_N"/>
</dbReference>
<dbReference type="PANTHER" id="PTHR10027">
    <property type="entry name" value="CALCIUM-ACTIVATED POTASSIUM CHANNEL ALPHA CHAIN"/>
    <property type="match status" value="1"/>
</dbReference>
<dbReference type="PANTHER" id="PTHR10027:SF9">
    <property type="entry name" value="POTASSIUM CHANNEL SUBFAMILY T MEMBER 2"/>
    <property type="match status" value="1"/>
</dbReference>
<dbReference type="Pfam" id="PF03493">
    <property type="entry name" value="BK_channel_a"/>
    <property type="match status" value="1"/>
</dbReference>
<dbReference type="Pfam" id="PF07885">
    <property type="entry name" value="Ion_trans_2"/>
    <property type="match status" value="1"/>
</dbReference>
<dbReference type="Pfam" id="PF22614">
    <property type="entry name" value="Slo-like_RCK"/>
    <property type="match status" value="2"/>
</dbReference>
<dbReference type="SUPFAM" id="SSF51735">
    <property type="entry name" value="NAD(P)-binding Rossmann-fold domains"/>
    <property type="match status" value="1"/>
</dbReference>
<dbReference type="SUPFAM" id="SSF81324">
    <property type="entry name" value="Voltage-gated potassium channels"/>
    <property type="match status" value="1"/>
</dbReference>
<dbReference type="PROSITE" id="PS51201">
    <property type="entry name" value="RCK_N"/>
    <property type="match status" value="2"/>
</dbReference>
<comment type="function">
    <text evidence="6 7 9 10 11 12">Sodium-activated and chloride-activated potassium channel (PubMed:14684870, PubMed:16687497, PubMed:25214519, PubMed:27682982, PubMed:29069600, PubMed:29740868). Produces rapidly activating outward rectifier K(+) currents (PubMed:14684870). Contributes to regulate neuronal excitability (PubMed:29069600).</text>
</comment>
<comment type="catalytic activity">
    <reaction evidence="6 11">
        <text>K(+)(in) = K(+)(out)</text>
        <dbReference type="Rhea" id="RHEA:29463"/>
        <dbReference type="ChEBI" id="CHEBI:29103"/>
    </reaction>
</comment>
<comment type="activity regulation">
    <text evidence="6 7 9 11">Are normally in a closed state unless activated by an increase in intracellular Na(+) and Cl(-) (PubMed:14684870, PubMed:16687497, PubMed:29069600). Inhibited upon stimulation of G-protein coupled receptors, such as CHRM1 and GRM1 (PubMed:16687497). There is conflicting data about the effect of ATP on KNCT2 channels activity. Intracellular ATP was initially report to inhibit the channel activity (PubMed:14684870). However, others studies conclude that KNCT2 channels are not inhibited by intracellular ATP (PubMed:25214519).</text>
</comment>
<comment type="subunit">
    <text evidence="1 2">Homotetramer (By similarity). Forms heteromeric channels with KCNT1; these heterodimer channels differ from the homomers in their unitary conductance, kinetic behavior, subcellular localization, and response to activation of protein kinase C (By similarity).</text>
</comment>
<comment type="subcellular location">
    <subcellularLocation>
        <location evidence="11">Cell membrane</location>
        <topology evidence="3">Multi-pass membrane protein</topology>
    </subcellularLocation>
</comment>
<comment type="alternative products">
    <event type="alternative splicing"/>
    <isoform>
        <id>Q6UVM3-1</id>
        <name>1</name>
        <sequence type="displayed"/>
    </isoform>
    <isoform>
        <id>Q6UVM3-2</id>
        <name>2</name>
        <sequence type="described" ref="VSP_029855"/>
    </isoform>
    <isoform>
        <id>Q6UVM3-3</id>
        <name>3</name>
        <sequence type="described" ref="VSP_029854 VSP_029855 VSP_029856"/>
    </isoform>
    <isoform>
        <id>Q6UVM3-4</id>
        <name>4</name>
        <sequence type="described" ref="VSP_029852 VSP_029853 VSP_029855 VSP_029856 VSP_029857"/>
    </isoform>
</comment>
<comment type="domain">
    <text evidence="9">The consensus ATP binding site (1025-GPKHSGKT-1032) seems to be non-functional.</text>
</comment>
<comment type="PTM">
    <text evidence="7">Phosphorylated by protein kinase C. Phosphorylation of the C-terminal domain inhibits channel activity.</text>
</comment>
<comment type="disease" evidence="11 12">
    <disease id="DI-05145">
        <name>Developmental and epileptic encephalopathy 57</name>
        <acronym>DEE57</acronym>
        <description>A form of epileptic encephalopathy, a heterogeneous group of severe early-onset epilepsies characterized by refractory seizures, neurodevelopmental impairment, and poor prognosis. Development is normal prior to seizure onset, after which cognitive and motor delays become apparent. DEE57 is an autosomal dominant condition.</description>
        <dbReference type="MIM" id="617771"/>
    </disease>
    <text>The disease is caused by variants affecting the gene represented in this entry.</text>
</comment>
<comment type="similarity">
    <text evidence="17">Belongs to the potassium channel family. Calcium-activated (TC 1.A.1.3) subfamily. KCa4.2/KCNT2 sub-subfamily.</text>
</comment>
<sequence length="1135" mass="130501">MVDLESEVPPLPPRYRFRDLLLGDQGWQNDDRVQVEFYMNENTFKERLKLFFIKNQRSSLRIRLFNFSLKLLSCLLYIIRVLLENPSQGNEWSHIFWVNRSLPLWGLQVSVALISLFETILLGYLSYKGNIWEQILRIPFILEIINAVPFIISIFWPSLRNLFVPVFLNCWLAKHALENMINDLHRAIQRTQSAMFNQVLILISTLLCLIFTCICGIQHLERIGKKLNLFDSLYFCIVTFSTVGFGDVTPETWSSKLFVVAMICVALVVLPIQFEQLAYLWMERQKSGGNYSRHRAQTEKHVVLCVSSLKIDLLMDFLNEFYAHPRLQDYYVVILCPTEMDVQVRRVLQIPMWSQRVIYLQGSALKDQDLLRAKMDDAEACFILSSRCEVDRTSSDHQTILRAWAVKDFAPNCPLYVQILKPENKFHIKFADHVVCEEEFKYAMLALNCICPATSTLITLLVHTSRGQEGQQSPEQWQKMYGRCSGNEVYHIVLEESTFFAEYEGKSFTYASFHAHKKFGVCLIGVRREDNKNILLNPGPRYIMNSTDICFYINITKEENSAFKNQDQQRKSNVSRSFYHGPSRLPVHSIIASMGTVAIDLQDTSCRSASGPTLSLPTEGSKEIRRPSIAPVLEVADTSSIQTCDLLSDQSEDETTPDEEMSSNLEYAKGYPPYSPYIGSSPTFCHLLHEKVPFCCLRLDKSCQHNYYEDAKAYGFKNKLIIVAAETAGNGLYNFIVPLRAYYRPKKELNPIVLLLDNPPDMHFLDAICWFPMVYYMVGSIDNLDDLLRCGVTFAANMVVVDKESTMSAEEDYMADAKTIVNVQTLFRLFSSLSIITELTHPANMRFMQFRAKDCYSLALSKLEKKERERGSNLAFMFRLPFAAGRVFSISMLDTLLYQSFVKDYMISITRLLLGLDTTPGSGFLCSMKITADDLWIRTYARLYQKLCSSTGDVPIGIYRTESQKLTTSESQISISVEEWEDTKDSKEQGHHRSNHRNSTSSDQSDHPLLRRKSMQWARRLSRKGPKHSGKTAEKITQQRLNLYRRSERQELAELVKNRMKHLGLSTVGYDEMNDHQSTLSYILINPSPDTRIELNDVVYLIRPDPLAYLPNSEPSRRNSICNVTGQDSREETQL</sequence>
<proteinExistence type="evidence at protein level"/>
<gene>
    <name type="primary">KCNT2</name>
    <name evidence="13" type="synonym">SLICK</name>
    <name type="synonym">Slo2.1</name>
</gene>
<protein>
    <recommendedName>
        <fullName>Potassium channel subfamily T member 2</fullName>
    </recommendedName>
    <alternativeName>
        <fullName evidence="18">KNa1.2</fullName>
    </alternativeName>
    <alternativeName>
        <fullName>Sequence like an intermediate conductance potassium channel subunit</fullName>
    </alternativeName>
    <alternativeName>
        <fullName>Sodium and chloride-activated ATP-sensitive potassium channel Slo2.1</fullName>
    </alternativeName>
</protein>